<gene>
    <name type="primary">MT-ND4L</name>
    <name type="synonym">MTND4L</name>
    <name type="synonym">NADH4L</name>
    <name type="synonym">ND4L</name>
</gene>
<evidence type="ECO:0000250" key="1">
    <source>
        <dbReference type="UniProtKB" id="P03901"/>
    </source>
</evidence>
<evidence type="ECO:0000250" key="2">
    <source>
        <dbReference type="UniProtKB" id="P03902"/>
    </source>
</evidence>
<evidence type="ECO:0000255" key="3"/>
<evidence type="ECO:0000305" key="4"/>
<sequence length="98" mass="10921">MPFIYINILLAFFISFIGLLMYRSHLMSSLLCLEGMMLSLYILGTLLCLNMHFTLSAMIPMILLVFAACEAAVGLALLVMVSNTYGLDHVQNLNLLQC</sequence>
<proteinExistence type="inferred from homology"/>
<protein>
    <recommendedName>
        <fullName>NADH-ubiquinone oxidoreductase chain 4L</fullName>
        <ecNumber>7.1.1.2</ecNumber>
    </recommendedName>
    <alternativeName>
        <fullName>NADH dehydrogenase subunit 4L</fullName>
    </alternativeName>
</protein>
<dbReference type="EC" id="7.1.1.2"/>
<dbReference type="EMBL" id="AJ421723">
    <property type="protein sequence ID" value="CAD18916.1"/>
    <property type="molecule type" value="Genomic_DNA"/>
</dbReference>
<dbReference type="EMBL" id="AY075116">
    <property type="protein sequence ID" value="AAL79375.1"/>
    <property type="molecule type" value="Genomic_DNA"/>
</dbReference>
<dbReference type="RefSeq" id="NP_536766.1">
    <property type="nucleotide sequence ID" value="NC_003314.1"/>
</dbReference>
<dbReference type="SMR" id="Q8W9M8"/>
<dbReference type="GeneID" id="804493"/>
<dbReference type="CTD" id="4539"/>
<dbReference type="GO" id="GO:0005743">
    <property type="term" value="C:mitochondrial inner membrane"/>
    <property type="evidence" value="ECO:0000250"/>
    <property type="project" value="UniProtKB"/>
</dbReference>
<dbReference type="GO" id="GO:0045271">
    <property type="term" value="C:respiratory chain complex I"/>
    <property type="evidence" value="ECO:0000250"/>
    <property type="project" value="UniProtKB"/>
</dbReference>
<dbReference type="GO" id="GO:0008137">
    <property type="term" value="F:NADH dehydrogenase (ubiquinone) activity"/>
    <property type="evidence" value="ECO:0000250"/>
    <property type="project" value="UniProtKB"/>
</dbReference>
<dbReference type="GO" id="GO:0042773">
    <property type="term" value="P:ATP synthesis coupled electron transport"/>
    <property type="evidence" value="ECO:0007669"/>
    <property type="project" value="InterPro"/>
</dbReference>
<dbReference type="FunFam" id="1.10.287.3510:FF:000002">
    <property type="entry name" value="NADH-ubiquinone oxidoreductase chain 4L"/>
    <property type="match status" value="1"/>
</dbReference>
<dbReference type="Gene3D" id="1.10.287.3510">
    <property type="match status" value="1"/>
</dbReference>
<dbReference type="InterPro" id="IPR001133">
    <property type="entry name" value="NADH_UbQ_OxRdtase_chain4L/K"/>
</dbReference>
<dbReference type="InterPro" id="IPR039428">
    <property type="entry name" value="NUOK/Mnh_C1-like"/>
</dbReference>
<dbReference type="PANTHER" id="PTHR11434:SF0">
    <property type="entry name" value="NADH-UBIQUINONE OXIDOREDUCTASE CHAIN 4L"/>
    <property type="match status" value="1"/>
</dbReference>
<dbReference type="PANTHER" id="PTHR11434">
    <property type="entry name" value="NADH-UBIQUINONE OXIDOREDUCTASE SUBUNIT ND4L"/>
    <property type="match status" value="1"/>
</dbReference>
<dbReference type="Pfam" id="PF00420">
    <property type="entry name" value="Oxidored_q2"/>
    <property type="match status" value="1"/>
</dbReference>
<geneLocation type="mitochondrion"/>
<feature type="chain" id="PRO_0000118419" description="NADH-ubiquinone oxidoreductase chain 4L">
    <location>
        <begin position="1"/>
        <end position="98"/>
    </location>
</feature>
<feature type="transmembrane region" description="Helical" evidence="3">
    <location>
        <begin position="1"/>
        <end position="21"/>
    </location>
</feature>
<feature type="transmembrane region" description="Helical" evidence="3">
    <location>
        <begin position="29"/>
        <end position="49"/>
    </location>
</feature>
<feature type="transmembrane region" description="Helical" evidence="3">
    <location>
        <begin position="61"/>
        <end position="81"/>
    </location>
</feature>
<feature type="sequence conflict" description="In Ref. 2; AAL79375." evidence="4" ref="2">
    <original>Y</original>
    <variation>F</variation>
    <location>
        <position position="41"/>
    </location>
</feature>
<reference key="1">
    <citation type="journal article" date="2002" name="Proc. Natl. Acad. Sci. U.S.A.">
        <title>Mammalian mitogenomic relationships and the root of the eutherian tree.</title>
        <authorList>
            <person name="Arnason U."/>
            <person name="Adegoke J.A."/>
            <person name="Bodin K."/>
            <person name="Born E.W."/>
            <person name="Esa Y.B."/>
            <person name="Gullberg A."/>
            <person name="Nilsson M."/>
            <person name="Short R.V."/>
            <person name="Xu X."/>
            <person name="Janke A."/>
        </authorList>
    </citation>
    <scope>NUCLEOTIDE SEQUENCE [GENOMIC DNA]</scope>
</reference>
<reference key="2">
    <citation type="submission" date="2002-01" db="EMBL/GenBank/DDBJ databases">
        <title>Complete mitochondrial genome of a dugong.</title>
        <authorList>
            <person name="McLenachan P.A."/>
            <person name="Phillips M.J."/>
            <person name="Penny D."/>
        </authorList>
    </citation>
    <scope>NUCLEOTIDE SEQUENCE [GENOMIC DNA]</scope>
</reference>
<name>NU4LM_DUGDU</name>
<comment type="function">
    <text evidence="1">Core subunit of the mitochondrial membrane respiratory chain NADH dehydrogenase (Complex I) which catalyzes electron transfer from NADH through the respiratory chain, using ubiquinone as an electron acceptor. Part of the enzyme membrane arm which is embedded in the lipid bilayer and involved in proton translocation.</text>
</comment>
<comment type="catalytic activity">
    <reaction evidence="1">
        <text>a ubiquinone + NADH + 5 H(+)(in) = a ubiquinol + NAD(+) + 4 H(+)(out)</text>
        <dbReference type="Rhea" id="RHEA:29091"/>
        <dbReference type="Rhea" id="RHEA-COMP:9565"/>
        <dbReference type="Rhea" id="RHEA-COMP:9566"/>
        <dbReference type="ChEBI" id="CHEBI:15378"/>
        <dbReference type="ChEBI" id="CHEBI:16389"/>
        <dbReference type="ChEBI" id="CHEBI:17976"/>
        <dbReference type="ChEBI" id="CHEBI:57540"/>
        <dbReference type="ChEBI" id="CHEBI:57945"/>
        <dbReference type="EC" id="7.1.1.2"/>
    </reaction>
    <physiologicalReaction direction="left-to-right" evidence="1">
        <dbReference type="Rhea" id="RHEA:29092"/>
    </physiologicalReaction>
</comment>
<comment type="subunit">
    <text evidence="2">Core subunit of respiratory chain NADH dehydrogenase (Complex I) which is composed of 45 different subunits.</text>
</comment>
<comment type="subcellular location">
    <subcellularLocation>
        <location evidence="2">Mitochondrion inner membrane</location>
        <topology evidence="3">Multi-pass membrane protein</topology>
    </subcellularLocation>
</comment>
<comment type="similarity">
    <text evidence="4">Belongs to the complex I subunit 4L family.</text>
</comment>
<keyword id="KW-0249">Electron transport</keyword>
<keyword id="KW-0472">Membrane</keyword>
<keyword id="KW-0496">Mitochondrion</keyword>
<keyword id="KW-0999">Mitochondrion inner membrane</keyword>
<keyword id="KW-0520">NAD</keyword>
<keyword id="KW-0679">Respiratory chain</keyword>
<keyword id="KW-1278">Translocase</keyword>
<keyword id="KW-0812">Transmembrane</keyword>
<keyword id="KW-1133">Transmembrane helix</keyword>
<keyword id="KW-0813">Transport</keyword>
<keyword id="KW-0830">Ubiquinone</keyword>
<accession>Q8W9M8</accession>
<accession>Q8SK57</accession>
<organism>
    <name type="scientific">Dugong dugon</name>
    <name type="common">Dugong</name>
    <name type="synonym">Trichechus dugon</name>
    <dbReference type="NCBI Taxonomy" id="29137"/>
    <lineage>
        <taxon>Eukaryota</taxon>
        <taxon>Metazoa</taxon>
        <taxon>Chordata</taxon>
        <taxon>Craniata</taxon>
        <taxon>Vertebrata</taxon>
        <taxon>Euteleostomi</taxon>
        <taxon>Mammalia</taxon>
        <taxon>Eutheria</taxon>
        <taxon>Afrotheria</taxon>
        <taxon>Sirenia</taxon>
        <taxon>Dugongidae</taxon>
        <taxon>Dugong</taxon>
    </lineage>
</organism>